<name>SPSS_METMA</name>
<gene>
    <name type="ordered locus">MM_1881</name>
</gene>
<evidence type="ECO:0000255" key="1">
    <source>
        <dbReference type="HAMAP-Rule" id="MF_01675"/>
    </source>
</evidence>
<proteinExistence type="inferred from homology"/>
<comment type="function">
    <text evidence="1">Converts O-phospho-L-seryl-tRNA(Cys) (Sep-tRNA(Cys)) to L-cysteinyl-tRNA(Cys) (Cys-tRNA(Cys)).</text>
</comment>
<comment type="catalytic activity">
    <reaction evidence="1">
        <text>O-phospho-L-seryl-tRNA(Cys) + hydrogen sulfide + H(+) = L-cysteinyl-tRNA(Cys) + phosphate</text>
        <dbReference type="Rhea" id="RHEA:25686"/>
        <dbReference type="Rhea" id="RHEA-COMP:9679"/>
        <dbReference type="Rhea" id="RHEA-COMP:9719"/>
        <dbReference type="ChEBI" id="CHEBI:15378"/>
        <dbReference type="ChEBI" id="CHEBI:29919"/>
        <dbReference type="ChEBI" id="CHEBI:43474"/>
        <dbReference type="ChEBI" id="CHEBI:78517"/>
        <dbReference type="ChEBI" id="CHEBI:78551"/>
        <dbReference type="EC" id="2.5.1.73"/>
    </reaction>
</comment>
<comment type="cofactor">
    <cofactor evidence="1">
        <name>pyridoxal 5'-phosphate</name>
        <dbReference type="ChEBI" id="CHEBI:597326"/>
    </cofactor>
</comment>
<comment type="subunit">
    <text evidence="1">Homodimer. Interacts with SepRS.</text>
</comment>
<comment type="similarity">
    <text evidence="1">Belongs to the SepCysS family.</text>
</comment>
<protein>
    <recommendedName>
        <fullName evidence="1">O-phospho-L-seryl-tRNA:Cys-tRNA synthase</fullName>
        <ecNumber evidence="1">2.5.1.73</ecNumber>
    </recommendedName>
    <alternativeName>
        <fullName evidence="1">Sep-tRNA:Cys-tRNA synthase</fullName>
        <shortName evidence="1">SepCysS</shortName>
    </alternativeName>
</protein>
<keyword id="KW-0648">Protein biosynthesis</keyword>
<keyword id="KW-0663">Pyridoxal phosphate</keyword>
<keyword id="KW-0808">Transferase</keyword>
<dbReference type="EC" id="2.5.1.73" evidence="1"/>
<dbReference type="EMBL" id="AE008384">
    <property type="protein sequence ID" value="AAM31577.1"/>
    <property type="molecule type" value="Genomic_DNA"/>
</dbReference>
<dbReference type="RefSeq" id="WP_011033816.1">
    <property type="nucleotide sequence ID" value="NC_003901.1"/>
</dbReference>
<dbReference type="SMR" id="Q8PVS9"/>
<dbReference type="GeneID" id="1480223"/>
<dbReference type="KEGG" id="mma:MM_1881"/>
<dbReference type="PATRIC" id="fig|192952.21.peg.2168"/>
<dbReference type="eggNOG" id="arCOG00091">
    <property type="taxonomic scope" value="Archaea"/>
</dbReference>
<dbReference type="HOGENOM" id="CLU_060476_0_0_2"/>
<dbReference type="BRENDA" id="2.5.1.73">
    <property type="organism ID" value="3270"/>
</dbReference>
<dbReference type="Proteomes" id="UP000000595">
    <property type="component" value="Chromosome"/>
</dbReference>
<dbReference type="GO" id="GO:0043766">
    <property type="term" value="F:Sep-tRNA:Cys-tRNA synthase activity"/>
    <property type="evidence" value="ECO:0007669"/>
    <property type="project" value="UniProtKB-UniRule"/>
</dbReference>
<dbReference type="GO" id="GO:0006412">
    <property type="term" value="P:translation"/>
    <property type="evidence" value="ECO:0007669"/>
    <property type="project" value="UniProtKB-KW"/>
</dbReference>
<dbReference type="CDD" id="cd06452">
    <property type="entry name" value="SepCysS"/>
    <property type="match status" value="1"/>
</dbReference>
<dbReference type="Gene3D" id="3.90.1150.10">
    <property type="entry name" value="Aspartate Aminotransferase, domain 1"/>
    <property type="match status" value="1"/>
</dbReference>
<dbReference type="Gene3D" id="3.40.640.10">
    <property type="entry name" value="Type I PLP-dependent aspartate aminotransferase-like (Major domain)"/>
    <property type="match status" value="1"/>
</dbReference>
<dbReference type="HAMAP" id="MF_01675">
    <property type="entry name" value="Sep_Cys_tRNA_synth"/>
    <property type="match status" value="1"/>
</dbReference>
<dbReference type="InterPro" id="IPR015424">
    <property type="entry name" value="PyrdxlP-dep_Trfase"/>
</dbReference>
<dbReference type="InterPro" id="IPR015421">
    <property type="entry name" value="PyrdxlP-dep_Trfase_major"/>
</dbReference>
<dbReference type="InterPro" id="IPR015422">
    <property type="entry name" value="PyrdxlP-dep_Trfase_small"/>
</dbReference>
<dbReference type="InterPro" id="IPR013375">
    <property type="entry name" value="Sep_Cys-tRNA_synth_arc"/>
</dbReference>
<dbReference type="InterPro" id="IPR008829">
    <property type="entry name" value="SepSecS/SepCysS"/>
</dbReference>
<dbReference type="NCBIfam" id="NF006810">
    <property type="entry name" value="PRK09331.1"/>
    <property type="match status" value="1"/>
</dbReference>
<dbReference type="NCBIfam" id="TIGR02539">
    <property type="entry name" value="SepCysS"/>
    <property type="match status" value="1"/>
</dbReference>
<dbReference type="PANTHER" id="PTHR43586">
    <property type="entry name" value="CYSTEINE DESULFURASE"/>
    <property type="match status" value="1"/>
</dbReference>
<dbReference type="PANTHER" id="PTHR43586:SF3">
    <property type="entry name" value="O-PHOSPHO-L-SERYL-TRNA:CYS-TRNA SYNTHASE"/>
    <property type="match status" value="1"/>
</dbReference>
<dbReference type="Pfam" id="PF05889">
    <property type="entry name" value="SepSecS"/>
    <property type="match status" value="1"/>
</dbReference>
<dbReference type="SUPFAM" id="SSF53383">
    <property type="entry name" value="PLP-dependent transferases"/>
    <property type="match status" value="1"/>
</dbReference>
<sequence>MTLDDSSLQKFGFIKRETLGSINIDPLQTGGLLTGAAKQALVEWGDGYSVCDFCGGVLDLVKKPPIHDFVHKALPEFLGCDEARVTNGARESKFAVMHSMGKPGDWVVLDGLAHYSSYVAAERAGLNIEVVPHAGSPEYHLDPGRYGKAIEEVTKENGKPPVLALVTYPDGSYGNIPDAAKIASVCHEYDVPLLLNGAYSVGRMPVSAKEIGADFIVGSGHKSMAASGPVGVLGVSEEYAPVVFRKSVHNKVKEIELLGCTARGATVMTLMASFPEVVKRTRNWDQEVENARWFSSRLEGMGFIQRGQKPHSHDLMFFEAPGFYEISQKVKNGRYFLYRELKERNIHGIKSGLTKYFKLSTFGLGKEKLGTVADAFEDILKKYENI</sequence>
<organism>
    <name type="scientific">Methanosarcina mazei (strain ATCC BAA-159 / DSM 3647 / Goe1 / Go1 / JCM 11833 / OCM 88)</name>
    <name type="common">Methanosarcina frisia</name>
    <dbReference type="NCBI Taxonomy" id="192952"/>
    <lineage>
        <taxon>Archaea</taxon>
        <taxon>Methanobacteriati</taxon>
        <taxon>Methanobacteriota</taxon>
        <taxon>Stenosarchaea group</taxon>
        <taxon>Methanomicrobia</taxon>
        <taxon>Methanosarcinales</taxon>
        <taxon>Methanosarcinaceae</taxon>
        <taxon>Methanosarcina</taxon>
    </lineage>
</organism>
<accession>Q8PVS9</accession>
<reference key="1">
    <citation type="journal article" date="2002" name="J. Mol. Microbiol. Biotechnol.">
        <title>The genome of Methanosarcina mazei: evidence for lateral gene transfer between Bacteria and Archaea.</title>
        <authorList>
            <person name="Deppenmeier U."/>
            <person name="Johann A."/>
            <person name="Hartsch T."/>
            <person name="Merkl R."/>
            <person name="Schmitz R.A."/>
            <person name="Martinez-Arias R."/>
            <person name="Henne A."/>
            <person name="Wiezer A."/>
            <person name="Baeumer S."/>
            <person name="Jacobi C."/>
            <person name="Brueggemann H."/>
            <person name="Lienard T."/>
            <person name="Christmann A."/>
            <person name="Boemecke M."/>
            <person name="Steckel S."/>
            <person name="Bhattacharyya A."/>
            <person name="Lykidis A."/>
            <person name="Overbeek R."/>
            <person name="Klenk H.-P."/>
            <person name="Gunsalus R.P."/>
            <person name="Fritz H.-J."/>
            <person name="Gottschalk G."/>
        </authorList>
    </citation>
    <scope>NUCLEOTIDE SEQUENCE [LARGE SCALE GENOMIC DNA]</scope>
    <source>
        <strain>ATCC BAA-159 / DSM 3647 / Goe1 / Go1 / JCM 11833 / OCM 88</strain>
    </source>
</reference>
<feature type="chain" id="PRO_0000359462" description="O-phospho-L-seryl-tRNA:Cys-tRNA synthase">
    <location>
        <begin position="1"/>
        <end position="386"/>
    </location>
</feature>
<feature type="binding site" evidence="1">
    <location>
        <begin position="89"/>
        <end position="90"/>
    </location>
    <ligand>
        <name>pyridoxal 5'-phosphate</name>
        <dbReference type="ChEBI" id="CHEBI:597326"/>
    </ligand>
</feature>
<feature type="binding site" evidence="1">
    <location>
        <position position="196"/>
    </location>
    <ligand>
        <name>pyridoxal 5'-phosphate</name>
        <dbReference type="ChEBI" id="CHEBI:597326"/>
    </ligand>
</feature>
<feature type="binding site" evidence="1">
    <location>
        <begin position="219"/>
        <end position="221"/>
    </location>
    <ligand>
        <name>pyridoxal 5'-phosphate</name>
        <dbReference type="ChEBI" id="CHEBI:597326"/>
    </ligand>
</feature>
<feature type="modified residue" description="N6-(pyridoxal phosphate)lysine" evidence="1">
    <location>
        <position position="222"/>
    </location>
</feature>